<evidence type="ECO:0000255" key="1">
    <source>
        <dbReference type="HAMAP-Rule" id="MF_00601"/>
    </source>
</evidence>
<accession>C1DNK9</accession>
<feature type="chain" id="PRO_1000212213" description="Ethanolamine ammonia-lyase small subunit">
    <location>
        <begin position="1"/>
        <end position="270"/>
    </location>
</feature>
<feature type="binding site" evidence="1">
    <location>
        <position position="161"/>
    </location>
    <ligand>
        <name>adenosylcob(III)alamin</name>
        <dbReference type="ChEBI" id="CHEBI:18408"/>
    </ligand>
</feature>
<feature type="binding site" evidence="1">
    <location>
        <position position="182"/>
    </location>
    <ligand>
        <name>adenosylcob(III)alamin</name>
        <dbReference type="ChEBI" id="CHEBI:18408"/>
    </ligand>
</feature>
<feature type="binding site" evidence="1">
    <location>
        <position position="211"/>
    </location>
    <ligand>
        <name>adenosylcob(III)alamin</name>
        <dbReference type="ChEBI" id="CHEBI:18408"/>
    </ligand>
</feature>
<proteinExistence type="inferred from homology"/>
<sequence>MSDRSPATENPWQQLRRLTPARIALGRAGASLPTAAHLAFQFAHAQARDAVHLPFEPAALQDGLRRRGLDGLLLRSAARDRDTYLQRPDLGRRLRPECATRLRDWHAEHGGGRDLAIVVADGLSALAVQRHALPLLDCLLERLPAEGWSLAPISLVEQGRVAVADEIGELLGARMTVILIGERPGLSSPDSLGLYFTFAPRVGLTDAARNCISNVRPEGLSYAMAAHKLLYLMREACRRRLSGVELKDEAEVARLDGAGSGPGNFLLGEG</sequence>
<comment type="function">
    <text evidence="1">Catalyzes the deamination of various vicinal amino-alcohols to oxo compounds. Allows this organism to utilize ethanolamine as the sole source of nitrogen and carbon in the presence of external vitamin B12.</text>
</comment>
<comment type="catalytic activity">
    <reaction evidence="1">
        <text>ethanolamine = acetaldehyde + NH4(+)</text>
        <dbReference type="Rhea" id="RHEA:15313"/>
        <dbReference type="ChEBI" id="CHEBI:15343"/>
        <dbReference type="ChEBI" id="CHEBI:28938"/>
        <dbReference type="ChEBI" id="CHEBI:57603"/>
        <dbReference type="EC" id="4.3.1.7"/>
    </reaction>
</comment>
<comment type="cofactor">
    <cofactor evidence="1">
        <name>adenosylcob(III)alamin</name>
        <dbReference type="ChEBI" id="CHEBI:18408"/>
    </cofactor>
    <text evidence="1">Binds between the large and small subunits.</text>
</comment>
<comment type="pathway">
    <text evidence="1">Amine and polyamine degradation; ethanolamine degradation.</text>
</comment>
<comment type="subunit">
    <text evidence="1">The basic unit is a heterodimer which dimerizes to form tetramers. The heterotetramers trimerize; 6 large subunits form a core ring with 6 small subunits projecting outwards.</text>
</comment>
<comment type="subcellular location">
    <subcellularLocation>
        <location evidence="1">Bacterial microcompartment</location>
    </subcellularLocation>
</comment>
<comment type="similarity">
    <text evidence="1">Belongs to the EutC family.</text>
</comment>
<dbReference type="EC" id="4.3.1.7" evidence="1"/>
<dbReference type="EMBL" id="CP001157">
    <property type="protein sequence ID" value="ACO77225.1"/>
    <property type="molecule type" value="Genomic_DNA"/>
</dbReference>
<dbReference type="RefSeq" id="WP_012699648.1">
    <property type="nucleotide sequence ID" value="NC_012560.1"/>
</dbReference>
<dbReference type="SMR" id="C1DNK9"/>
<dbReference type="STRING" id="322710.Avin_09930"/>
<dbReference type="EnsemblBacteria" id="ACO77225">
    <property type="protein sequence ID" value="ACO77225"/>
    <property type="gene ID" value="Avin_09930"/>
</dbReference>
<dbReference type="GeneID" id="88184342"/>
<dbReference type="KEGG" id="avn:Avin_09930"/>
<dbReference type="eggNOG" id="COG4302">
    <property type="taxonomic scope" value="Bacteria"/>
</dbReference>
<dbReference type="HOGENOM" id="CLU_068224_1_0_6"/>
<dbReference type="OrthoDB" id="114248at2"/>
<dbReference type="UniPathway" id="UPA00560"/>
<dbReference type="Proteomes" id="UP000002424">
    <property type="component" value="Chromosome"/>
</dbReference>
<dbReference type="GO" id="GO:0009350">
    <property type="term" value="C:ethanolamine ammonia-lyase complex"/>
    <property type="evidence" value="ECO:0007669"/>
    <property type="project" value="UniProtKB-UniRule"/>
</dbReference>
<dbReference type="GO" id="GO:0031471">
    <property type="term" value="C:ethanolamine degradation polyhedral organelle"/>
    <property type="evidence" value="ECO:0007669"/>
    <property type="project" value="UniProtKB-UniRule"/>
</dbReference>
<dbReference type="GO" id="GO:0031419">
    <property type="term" value="F:cobalamin binding"/>
    <property type="evidence" value="ECO:0007669"/>
    <property type="project" value="UniProtKB-UniRule"/>
</dbReference>
<dbReference type="GO" id="GO:0008851">
    <property type="term" value="F:ethanolamine ammonia-lyase activity"/>
    <property type="evidence" value="ECO:0007669"/>
    <property type="project" value="UniProtKB-UniRule"/>
</dbReference>
<dbReference type="GO" id="GO:0006520">
    <property type="term" value="P:amino acid metabolic process"/>
    <property type="evidence" value="ECO:0007669"/>
    <property type="project" value="InterPro"/>
</dbReference>
<dbReference type="GO" id="GO:0046336">
    <property type="term" value="P:ethanolamine catabolic process"/>
    <property type="evidence" value="ECO:0007669"/>
    <property type="project" value="UniProtKB-UniRule"/>
</dbReference>
<dbReference type="FunFam" id="3.40.50.11240:FF:000001">
    <property type="entry name" value="Ethanolamine ammonia-lyase light chain"/>
    <property type="match status" value="1"/>
</dbReference>
<dbReference type="Gene3D" id="3.40.50.11240">
    <property type="entry name" value="Ethanolamine ammonia-lyase light chain (EutC)"/>
    <property type="match status" value="1"/>
</dbReference>
<dbReference type="Gene3D" id="1.10.30.40">
    <property type="entry name" value="Ethanolamine ammonia-lyase light chain (EutC), N-terminal domain"/>
    <property type="match status" value="1"/>
</dbReference>
<dbReference type="HAMAP" id="MF_00601">
    <property type="entry name" value="EutC"/>
    <property type="match status" value="1"/>
</dbReference>
<dbReference type="InterPro" id="IPR009246">
    <property type="entry name" value="EutC"/>
</dbReference>
<dbReference type="InterPro" id="IPR042251">
    <property type="entry name" value="EutC_C"/>
</dbReference>
<dbReference type="InterPro" id="IPR042255">
    <property type="entry name" value="EutC_N"/>
</dbReference>
<dbReference type="NCBIfam" id="NF003971">
    <property type="entry name" value="PRK05465.1"/>
    <property type="match status" value="1"/>
</dbReference>
<dbReference type="PANTHER" id="PTHR39330">
    <property type="entry name" value="ETHANOLAMINE AMMONIA-LYASE LIGHT CHAIN"/>
    <property type="match status" value="1"/>
</dbReference>
<dbReference type="PANTHER" id="PTHR39330:SF1">
    <property type="entry name" value="ETHANOLAMINE AMMONIA-LYASE SMALL SUBUNIT"/>
    <property type="match status" value="1"/>
</dbReference>
<dbReference type="Pfam" id="PF05985">
    <property type="entry name" value="EutC"/>
    <property type="match status" value="1"/>
</dbReference>
<dbReference type="PIRSF" id="PIRSF018982">
    <property type="entry name" value="EutC"/>
    <property type="match status" value="1"/>
</dbReference>
<organism>
    <name type="scientific">Azotobacter vinelandii (strain DJ / ATCC BAA-1303)</name>
    <dbReference type="NCBI Taxonomy" id="322710"/>
    <lineage>
        <taxon>Bacteria</taxon>
        <taxon>Pseudomonadati</taxon>
        <taxon>Pseudomonadota</taxon>
        <taxon>Gammaproteobacteria</taxon>
        <taxon>Pseudomonadales</taxon>
        <taxon>Pseudomonadaceae</taxon>
        <taxon>Azotobacter</taxon>
    </lineage>
</organism>
<gene>
    <name evidence="1" type="primary">eutC</name>
    <name type="ordered locus">Avin_09930</name>
</gene>
<name>EUTC_AZOVD</name>
<keyword id="KW-1283">Bacterial microcompartment</keyword>
<keyword id="KW-0846">Cobalamin</keyword>
<keyword id="KW-0170">Cobalt</keyword>
<keyword id="KW-0456">Lyase</keyword>
<protein>
    <recommendedName>
        <fullName evidence="1">Ethanolamine ammonia-lyase small subunit</fullName>
        <shortName evidence="1">EAL small subunit</shortName>
        <ecNumber evidence="1">4.3.1.7</ecNumber>
    </recommendedName>
</protein>
<reference key="1">
    <citation type="journal article" date="2009" name="J. Bacteriol.">
        <title>Genome sequence of Azotobacter vinelandii, an obligate aerobe specialized to support diverse anaerobic metabolic processes.</title>
        <authorList>
            <person name="Setubal J.C."/>
            <person name="Dos Santos P."/>
            <person name="Goldman B.S."/>
            <person name="Ertesvaag H."/>
            <person name="Espin G."/>
            <person name="Rubio L.M."/>
            <person name="Valla S."/>
            <person name="Almeida N.F."/>
            <person name="Balasubramanian D."/>
            <person name="Cromes L."/>
            <person name="Curatti L."/>
            <person name="Du Z."/>
            <person name="Godsy E."/>
            <person name="Goodner B."/>
            <person name="Hellner-Burris K."/>
            <person name="Hernandez J.A."/>
            <person name="Houmiel K."/>
            <person name="Imperial J."/>
            <person name="Kennedy C."/>
            <person name="Larson T.J."/>
            <person name="Latreille P."/>
            <person name="Ligon L.S."/>
            <person name="Lu J."/>
            <person name="Maerk M."/>
            <person name="Miller N.M."/>
            <person name="Norton S."/>
            <person name="O'Carroll I.P."/>
            <person name="Paulsen I."/>
            <person name="Raulfs E.C."/>
            <person name="Roemer R."/>
            <person name="Rosser J."/>
            <person name="Segura D."/>
            <person name="Slater S."/>
            <person name="Stricklin S.L."/>
            <person name="Studholme D.J."/>
            <person name="Sun J."/>
            <person name="Viana C.J."/>
            <person name="Wallin E."/>
            <person name="Wang B."/>
            <person name="Wheeler C."/>
            <person name="Zhu H."/>
            <person name="Dean D.R."/>
            <person name="Dixon R."/>
            <person name="Wood D."/>
        </authorList>
    </citation>
    <scope>NUCLEOTIDE SEQUENCE [LARGE SCALE GENOMIC DNA]</scope>
    <source>
        <strain>DJ / ATCC BAA-1303</strain>
    </source>
</reference>